<proteinExistence type="evidence at protein level"/>
<comment type="subcellular location">
    <subcellularLocation>
        <location>Secreted</location>
    </subcellularLocation>
</comment>
<comment type="tissue specificity">
    <text>Expressed by the venom duct.</text>
</comment>
<comment type="domain">
    <text>The cysteine framework is C-C.</text>
</comment>
<accession>P0DJB3</accession>
<reference key="1">
    <citation type="journal article" date="2010" name="Mol. Phylogenet. Evol.">
        <title>Evolution of Conus peptide toxins: analysis of Conus californicus Reeve, 1844.</title>
        <authorList>
            <person name="Biggs J.S."/>
            <person name="Watkins M."/>
            <person name="Puillandre N."/>
            <person name="Ownby J.P."/>
            <person name="Lopez-Vera E."/>
            <person name="Christensen S."/>
            <person name="Moreno K.J."/>
            <person name="Bernaldez J."/>
            <person name="Licea-Navarro A."/>
            <person name="Corneli P.S."/>
            <person name="Olivera B.M."/>
        </authorList>
    </citation>
    <scope>PROTEIN SEQUENCE</scope>
    <source>
        <tissue>Venom</tissue>
    </source>
</reference>
<name>CUX1_CONCL</name>
<sequence length="12" mass="1346">DNSCTPKPSCFF</sequence>
<feature type="peptide" id="PRO_0000415049" description="Conotoxin Cltx-1">
    <location>
        <begin position="1"/>
        <end position="12"/>
    </location>
</feature>
<feature type="disulfide bond" evidence="1">
    <location>
        <begin position="4"/>
        <end position="10"/>
    </location>
</feature>
<dbReference type="GO" id="GO:0005576">
    <property type="term" value="C:extracellular region"/>
    <property type="evidence" value="ECO:0007669"/>
    <property type="project" value="UniProtKB-SubCell"/>
</dbReference>
<dbReference type="GO" id="GO:0090729">
    <property type="term" value="F:toxin activity"/>
    <property type="evidence" value="ECO:0007669"/>
    <property type="project" value="UniProtKB-KW"/>
</dbReference>
<keyword id="KW-0903">Direct protein sequencing</keyword>
<keyword id="KW-1015">Disulfide bond</keyword>
<keyword id="KW-0528">Neurotoxin</keyword>
<keyword id="KW-0964">Secreted</keyword>
<keyword id="KW-0800">Toxin</keyword>
<evidence type="ECO:0000250" key="1"/>
<evidence type="ECO:0000303" key="2">
    <source>
    </source>
</evidence>
<evidence type="ECO:0000305" key="3"/>
<protein>
    <recommendedName>
        <fullName evidence="2">Conotoxin Cltx-1</fullName>
    </recommendedName>
    <alternativeName>
        <fullName evidence="3">CalTx-1</fullName>
    </alternativeName>
</protein>
<organism>
    <name type="scientific">Californiconus californicus</name>
    <name type="common">California cone</name>
    <name type="synonym">Conus californicus</name>
    <dbReference type="NCBI Taxonomy" id="1736779"/>
    <lineage>
        <taxon>Eukaryota</taxon>
        <taxon>Metazoa</taxon>
        <taxon>Spiralia</taxon>
        <taxon>Lophotrochozoa</taxon>
        <taxon>Mollusca</taxon>
        <taxon>Gastropoda</taxon>
        <taxon>Caenogastropoda</taxon>
        <taxon>Neogastropoda</taxon>
        <taxon>Conoidea</taxon>
        <taxon>Conidae</taxon>
        <taxon>Californiconus</taxon>
    </lineage>
</organism>